<feature type="chain" id="PRO_0000344168" description="Urease accessory protein UreF">
    <location>
        <begin position="1"/>
        <end position="210"/>
    </location>
</feature>
<protein>
    <recommendedName>
        <fullName evidence="1">Urease accessory protein UreF</fullName>
    </recommendedName>
</protein>
<gene>
    <name evidence="1" type="primary">ureF</name>
    <name type="ordered locus">RHOS4_19090</name>
    <name type="ORF">RSP_0303</name>
</gene>
<comment type="function">
    <text evidence="1">Required for maturation of urease via the functional incorporation of the urease nickel metallocenter.</text>
</comment>
<comment type="subunit">
    <text evidence="1">UreD, UreF and UreG form a complex that acts as a GTP-hydrolysis-dependent molecular chaperone, activating the urease apoprotein by helping to assemble the nickel containing metallocenter of UreC. The UreE protein probably delivers the nickel.</text>
</comment>
<comment type="subcellular location">
    <subcellularLocation>
        <location evidence="1">Cytoplasm</location>
    </subcellularLocation>
</comment>
<comment type="similarity">
    <text evidence="1">Belongs to the UreF family.</text>
</comment>
<dbReference type="EMBL" id="AF195122">
    <property type="protein sequence ID" value="AAF24257.1"/>
    <property type="molecule type" value="Genomic_DNA"/>
</dbReference>
<dbReference type="EMBL" id="CP000143">
    <property type="protein sequence ID" value="ABA79477.1"/>
    <property type="molecule type" value="Genomic_DNA"/>
</dbReference>
<dbReference type="RefSeq" id="WP_011338136.1">
    <property type="nucleotide sequence ID" value="NC_007493.2"/>
</dbReference>
<dbReference type="RefSeq" id="YP_353378.1">
    <property type="nucleotide sequence ID" value="NC_007493.2"/>
</dbReference>
<dbReference type="SMR" id="Q3J157"/>
<dbReference type="STRING" id="272943.RSP_0303"/>
<dbReference type="EnsemblBacteria" id="ABA79477">
    <property type="protein sequence ID" value="ABA79477"/>
    <property type="gene ID" value="RSP_0303"/>
</dbReference>
<dbReference type="GeneID" id="3719158"/>
<dbReference type="KEGG" id="rsp:RSP_0303"/>
<dbReference type="PATRIC" id="fig|272943.9.peg.2248"/>
<dbReference type="eggNOG" id="COG0830">
    <property type="taxonomic scope" value="Bacteria"/>
</dbReference>
<dbReference type="OrthoDB" id="9798772at2"/>
<dbReference type="PhylomeDB" id="Q3J157"/>
<dbReference type="Proteomes" id="UP000002703">
    <property type="component" value="Chromosome 1"/>
</dbReference>
<dbReference type="GO" id="GO:0005737">
    <property type="term" value="C:cytoplasm"/>
    <property type="evidence" value="ECO:0007669"/>
    <property type="project" value="UniProtKB-SubCell"/>
</dbReference>
<dbReference type="GO" id="GO:0016151">
    <property type="term" value="F:nickel cation binding"/>
    <property type="evidence" value="ECO:0007669"/>
    <property type="project" value="UniProtKB-UniRule"/>
</dbReference>
<dbReference type="Gene3D" id="1.10.4190.10">
    <property type="entry name" value="Urease accessory protein UreF"/>
    <property type="match status" value="1"/>
</dbReference>
<dbReference type="HAMAP" id="MF_01385">
    <property type="entry name" value="UreF"/>
    <property type="match status" value="1"/>
</dbReference>
<dbReference type="InterPro" id="IPR002639">
    <property type="entry name" value="UreF"/>
</dbReference>
<dbReference type="InterPro" id="IPR038277">
    <property type="entry name" value="UreF_sf"/>
</dbReference>
<dbReference type="PANTHER" id="PTHR33620">
    <property type="entry name" value="UREASE ACCESSORY PROTEIN F"/>
    <property type="match status" value="1"/>
</dbReference>
<dbReference type="PANTHER" id="PTHR33620:SF1">
    <property type="entry name" value="UREASE ACCESSORY PROTEIN F"/>
    <property type="match status" value="1"/>
</dbReference>
<dbReference type="Pfam" id="PF01730">
    <property type="entry name" value="UreF"/>
    <property type="match status" value="1"/>
</dbReference>
<dbReference type="PIRSF" id="PIRSF009467">
    <property type="entry name" value="Ureas_acces_UreF"/>
    <property type="match status" value="1"/>
</dbReference>
<reference key="1">
    <citation type="journal article" date="2000" name="Nucleic Acids Res.">
        <title>DNA sequence analysis of the photosynthesis region of Rhodobacter sphaeroides 2.4.1.</title>
        <authorList>
            <person name="Choudhary M."/>
            <person name="Kaplan S."/>
        </authorList>
    </citation>
    <scope>NUCLEOTIDE SEQUENCE [GENOMIC DNA]</scope>
</reference>
<reference key="2">
    <citation type="submission" date="2005-09" db="EMBL/GenBank/DDBJ databases">
        <title>Complete sequence of chromosome 1 of Rhodobacter sphaeroides 2.4.1.</title>
        <authorList>
            <person name="Copeland A."/>
            <person name="Lucas S."/>
            <person name="Lapidus A."/>
            <person name="Barry K."/>
            <person name="Detter J.C."/>
            <person name="Glavina T."/>
            <person name="Hammon N."/>
            <person name="Israni S."/>
            <person name="Pitluck S."/>
            <person name="Richardson P."/>
            <person name="Mackenzie C."/>
            <person name="Choudhary M."/>
            <person name="Larimer F."/>
            <person name="Hauser L.J."/>
            <person name="Land M."/>
            <person name="Donohue T.J."/>
            <person name="Kaplan S."/>
        </authorList>
    </citation>
    <scope>NUCLEOTIDE SEQUENCE [LARGE SCALE GENOMIC DNA]</scope>
    <source>
        <strain>ATCC 17023 / DSM 158 / JCM 6121 / CCUG 31486 / LMG 2827 / NBRC 12203 / NCIMB 8253 / ATH 2.4.1.</strain>
    </source>
</reference>
<accession>Q3J157</accession>
<accession>Q9RFF0</accession>
<organism>
    <name type="scientific">Cereibacter sphaeroides (strain ATCC 17023 / DSM 158 / JCM 6121 / CCUG 31486 / LMG 2827 / NBRC 12203 / NCIMB 8253 / ATH 2.4.1.)</name>
    <name type="common">Rhodobacter sphaeroides</name>
    <dbReference type="NCBI Taxonomy" id="272943"/>
    <lineage>
        <taxon>Bacteria</taxon>
        <taxon>Pseudomonadati</taxon>
        <taxon>Pseudomonadota</taxon>
        <taxon>Alphaproteobacteria</taxon>
        <taxon>Rhodobacterales</taxon>
        <taxon>Paracoccaceae</taxon>
        <taxon>Cereibacter</taxon>
    </lineage>
</organism>
<sequence length="210" mass="21743">MSAALLSLVQWLSPAFPTGAFAYSHGLEWAISEGEVRDAASARRWIADVLAFGAGRTDAILLAHALRGHDPGALSDLARALAPAAERLRETEEQGAAFAATVAALTGRDLPPRPLPVALGQAAAPLGLPVAEVLALMLHAFAANLVSAAVRFVPLGQTEGQATLAALHPRIGEIAAESAEAPLDALGSAALRGDLAAMRHETQEVRIFKT</sequence>
<evidence type="ECO:0000255" key="1">
    <source>
        <dbReference type="HAMAP-Rule" id="MF_01385"/>
    </source>
</evidence>
<proteinExistence type="inferred from homology"/>
<keyword id="KW-0143">Chaperone</keyword>
<keyword id="KW-0963">Cytoplasm</keyword>
<keyword id="KW-0996">Nickel insertion</keyword>
<keyword id="KW-1185">Reference proteome</keyword>
<name>UREF_CERS4</name>